<gene>
    <name evidence="1" type="primary">prmA</name>
    <name type="ordered locus">LPC_2882</name>
</gene>
<evidence type="ECO:0000255" key="1">
    <source>
        <dbReference type="HAMAP-Rule" id="MF_00735"/>
    </source>
</evidence>
<sequence>MWFQLKIEHCPNDKIEEITEELEEYGALSITLTDKNDNPVLEPEPGTTPLWPEVIIHALFAQAEEAQYVREQLVAKTPSLHCSLEPLADKNWERAWMDDFRPQRFGNRLWVCPTWLPPPEPDAVNLMLDPGLAFGTGTHATTSLCLTWLEQADLKNKSVIDYGCGSGILSLAAIKLGAKHVYAVDIDNQALQATQNNAHANHITESQLSISSPEALQNPVHLIIANILLAPLISLKERFHQLLPSGAHLVTSGILEEQAPLLIDAYDSAFTHIATEYCEGWSLLVFTSK</sequence>
<dbReference type="EC" id="2.1.1.-" evidence="1"/>
<dbReference type="EMBL" id="CP000675">
    <property type="protein sequence ID" value="ABQ56783.1"/>
    <property type="molecule type" value="Genomic_DNA"/>
</dbReference>
<dbReference type="RefSeq" id="WP_011945632.1">
    <property type="nucleotide sequence ID" value="NZ_JAPMSS010000006.1"/>
</dbReference>
<dbReference type="SMR" id="A5IHD3"/>
<dbReference type="KEGG" id="lpc:LPC_2882"/>
<dbReference type="HOGENOM" id="CLU_049382_4_1_6"/>
<dbReference type="GO" id="GO:0005829">
    <property type="term" value="C:cytosol"/>
    <property type="evidence" value="ECO:0007669"/>
    <property type="project" value="TreeGrafter"/>
</dbReference>
<dbReference type="GO" id="GO:0016279">
    <property type="term" value="F:protein-lysine N-methyltransferase activity"/>
    <property type="evidence" value="ECO:0007669"/>
    <property type="project" value="TreeGrafter"/>
</dbReference>
<dbReference type="GO" id="GO:0032259">
    <property type="term" value="P:methylation"/>
    <property type="evidence" value="ECO:0007669"/>
    <property type="project" value="UniProtKB-KW"/>
</dbReference>
<dbReference type="CDD" id="cd02440">
    <property type="entry name" value="AdoMet_MTases"/>
    <property type="match status" value="1"/>
</dbReference>
<dbReference type="Gene3D" id="3.40.50.150">
    <property type="entry name" value="Vaccinia Virus protein VP39"/>
    <property type="match status" value="1"/>
</dbReference>
<dbReference type="HAMAP" id="MF_00735">
    <property type="entry name" value="Methyltr_PrmA"/>
    <property type="match status" value="1"/>
</dbReference>
<dbReference type="InterPro" id="IPR050078">
    <property type="entry name" value="Ribosomal_L11_MeTrfase_PrmA"/>
</dbReference>
<dbReference type="InterPro" id="IPR004498">
    <property type="entry name" value="Ribosomal_PrmA_MeTrfase"/>
</dbReference>
<dbReference type="InterPro" id="IPR029063">
    <property type="entry name" value="SAM-dependent_MTases_sf"/>
</dbReference>
<dbReference type="NCBIfam" id="TIGR00406">
    <property type="entry name" value="prmA"/>
    <property type="match status" value="1"/>
</dbReference>
<dbReference type="PANTHER" id="PTHR43648">
    <property type="entry name" value="ELECTRON TRANSFER FLAVOPROTEIN BETA SUBUNIT LYSINE METHYLTRANSFERASE"/>
    <property type="match status" value="1"/>
</dbReference>
<dbReference type="PANTHER" id="PTHR43648:SF1">
    <property type="entry name" value="ELECTRON TRANSFER FLAVOPROTEIN BETA SUBUNIT LYSINE METHYLTRANSFERASE"/>
    <property type="match status" value="1"/>
</dbReference>
<dbReference type="Pfam" id="PF06325">
    <property type="entry name" value="PrmA"/>
    <property type="match status" value="1"/>
</dbReference>
<dbReference type="PIRSF" id="PIRSF000401">
    <property type="entry name" value="RPL11_MTase"/>
    <property type="match status" value="1"/>
</dbReference>
<dbReference type="SUPFAM" id="SSF53335">
    <property type="entry name" value="S-adenosyl-L-methionine-dependent methyltransferases"/>
    <property type="match status" value="1"/>
</dbReference>
<organism>
    <name type="scientific">Legionella pneumophila (strain Corby)</name>
    <dbReference type="NCBI Taxonomy" id="400673"/>
    <lineage>
        <taxon>Bacteria</taxon>
        <taxon>Pseudomonadati</taxon>
        <taxon>Pseudomonadota</taxon>
        <taxon>Gammaproteobacteria</taxon>
        <taxon>Legionellales</taxon>
        <taxon>Legionellaceae</taxon>
        <taxon>Legionella</taxon>
    </lineage>
</organism>
<name>PRMA_LEGPC</name>
<reference key="1">
    <citation type="submission" date="2006-11" db="EMBL/GenBank/DDBJ databases">
        <title>Identification and characterization of a new conjugation/ type IVA secretion system (trb/tra) of L. pneumophila Corby localized on a mobile genomic island.</title>
        <authorList>
            <person name="Gloeckner G."/>
            <person name="Albert-Weissenberger C."/>
            <person name="Weinmann E."/>
            <person name="Jacobi S."/>
            <person name="Schunder E."/>
            <person name="Steinert M."/>
            <person name="Buchrieser C."/>
            <person name="Hacker J."/>
            <person name="Heuner K."/>
        </authorList>
    </citation>
    <scope>NUCLEOTIDE SEQUENCE [LARGE SCALE GENOMIC DNA]</scope>
    <source>
        <strain>Corby</strain>
    </source>
</reference>
<proteinExistence type="inferred from homology"/>
<keyword id="KW-0963">Cytoplasm</keyword>
<keyword id="KW-0489">Methyltransferase</keyword>
<keyword id="KW-0949">S-adenosyl-L-methionine</keyword>
<keyword id="KW-0808">Transferase</keyword>
<feature type="chain" id="PRO_1000046041" description="Ribosomal protein L11 methyltransferase">
    <location>
        <begin position="1"/>
        <end position="289"/>
    </location>
</feature>
<feature type="binding site" evidence="1">
    <location>
        <position position="142"/>
    </location>
    <ligand>
        <name>S-adenosyl-L-methionine</name>
        <dbReference type="ChEBI" id="CHEBI:59789"/>
    </ligand>
</feature>
<feature type="binding site" evidence="1">
    <location>
        <position position="163"/>
    </location>
    <ligand>
        <name>S-adenosyl-L-methionine</name>
        <dbReference type="ChEBI" id="CHEBI:59789"/>
    </ligand>
</feature>
<feature type="binding site" evidence="1">
    <location>
        <position position="185"/>
    </location>
    <ligand>
        <name>S-adenosyl-L-methionine</name>
        <dbReference type="ChEBI" id="CHEBI:59789"/>
    </ligand>
</feature>
<feature type="binding site" evidence="1">
    <location>
        <position position="226"/>
    </location>
    <ligand>
        <name>S-adenosyl-L-methionine</name>
        <dbReference type="ChEBI" id="CHEBI:59789"/>
    </ligand>
</feature>
<protein>
    <recommendedName>
        <fullName evidence="1">Ribosomal protein L11 methyltransferase</fullName>
        <shortName evidence="1">L11 Mtase</shortName>
        <ecNumber evidence="1">2.1.1.-</ecNumber>
    </recommendedName>
</protein>
<comment type="function">
    <text evidence="1">Methylates ribosomal protein L11.</text>
</comment>
<comment type="catalytic activity">
    <reaction evidence="1">
        <text>L-lysyl-[protein] + 3 S-adenosyl-L-methionine = N(6),N(6),N(6)-trimethyl-L-lysyl-[protein] + 3 S-adenosyl-L-homocysteine + 3 H(+)</text>
        <dbReference type="Rhea" id="RHEA:54192"/>
        <dbReference type="Rhea" id="RHEA-COMP:9752"/>
        <dbReference type="Rhea" id="RHEA-COMP:13826"/>
        <dbReference type="ChEBI" id="CHEBI:15378"/>
        <dbReference type="ChEBI" id="CHEBI:29969"/>
        <dbReference type="ChEBI" id="CHEBI:57856"/>
        <dbReference type="ChEBI" id="CHEBI:59789"/>
        <dbReference type="ChEBI" id="CHEBI:61961"/>
    </reaction>
</comment>
<comment type="subcellular location">
    <subcellularLocation>
        <location evidence="1">Cytoplasm</location>
    </subcellularLocation>
</comment>
<comment type="similarity">
    <text evidence="1">Belongs to the methyltransferase superfamily. PrmA family.</text>
</comment>
<accession>A5IHD3</accession>